<evidence type="ECO:0000255" key="1">
    <source>
        <dbReference type="HAMAP-Rule" id="MF_00713"/>
    </source>
</evidence>
<dbReference type="EC" id="1.4.4.2" evidence="1"/>
<dbReference type="EMBL" id="CP000560">
    <property type="protein sequence ID" value="ABS74648.1"/>
    <property type="molecule type" value="Genomic_DNA"/>
</dbReference>
<dbReference type="RefSeq" id="WP_007408334.1">
    <property type="nucleotide sequence ID" value="NC_009725.2"/>
</dbReference>
<dbReference type="SMR" id="A7Z6M2"/>
<dbReference type="GeneID" id="93081425"/>
<dbReference type="KEGG" id="bay:RBAM_022870"/>
<dbReference type="HOGENOM" id="CLU_004620_5_0_9"/>
<dbReference type="Proteomes" id="UP000001120">
    <property type="component" value="Chromosome"/>
</dbReference>
<dbReference type="GO" id="GO:0005829">
    <property type="term" value="C:cytosol"/>
    <property type="evidence" value="ECO:0007669"/>
    <property type="project" value="TreeGrafter"/>
</dbReference>
<dbReference type="GO" id="GO:0005960">
    <property type="term" value="C:glycine cleavage complex"/>
    <property type="evidence" value="ECO:0007669"/>
    <property type="project" value="TreeGrafter"/>
</dbReference>
<dbReference type="GO" id="GO:0016594">
    <property type="term" value="F:glycine binding"/>
    <property type="evidence" value="ECO:0007669"/>
    <property type="project" value="TreeGrafter"/>
</dbReference>
<dbReference type="GO" id="GO:0004375">
    <property type="term" value="F:glycine dehydrogenase (decarboxylating) activity"/>
    <property type="evidence" value="ECO:0007669"/>
    <property type="project" value="UniProtKB-EC"/>
</dbReference>
<dbReference type="GO" id="GO:0030170">
    <property type="term" value="F:pyridoxal phosphate binding"/>
    <property type="evidence" value="ECO:0007669"/>
    <property type="project" value="TreeGrafter"/>
</dbReference>
<dbReference type="GO" id="GO:0019464">
    <property type="term" value="P:glycine decarboxylation via glycine cleavage system"/>
    <property type="evidence" value="ECO:0007669"/>
    <property type="project" value="UniProtKB-UniRule"/>
</dbReference>
<dbReference type="CDD" id="cd00613">
    <property type="entry name" value="GDC-P"/>
    <property type="match status" value="1"/>
</dbReference>
<dbReference type="FunFam" id="3.40.640.10:FF:000034">
    <property type="entry name" value="Probable glycine dehydrogenase (decarboxylating) subunit 2"/>
    <property type="match status" value="1"/>
</dbReference>
<dbReference type="FunFam" id="3.90.1150.10:FF:000014">
    <property type="entry name" value="Probable glycine dehydrogenase (decarboxylating) subunit 2"/>
    <property type="match status" value="1"/>
</dbReference>
<dbReference type="Gene3D" id="6.20.440.10">
    <property type="match status" value="1"/>
</dbReference>
<dbReference type="Gene3D" id="3.90.1150.10">
    <property type="entry name" value="Aspartate Aminotransferase, domain 1"/>
    <property type="match status" value="1"/>
</dbReference>
<dbReference type="Gene3D" id="3.40.640.10">
    <property type="entry name" value="Type I PLP-dependent aspartate aminotransferase-like (Major domain)"/>
    <property type="match status" value="1"/>
</dbReference>
<dbReference type="HAMAP" id="MF_00713">
    <property type="entry name" value="GcvPB"/>
    <property type="match status" value="1"/>
</dbReference>
<dbReference type="InterPro" id="IPR023012">
    <property type="entry name" value="GcvPB"/>
</dbReference>
<dbReference type="InterPro" id="IPR049316">
    <property type="entry name" value="GDC-P_C"/>
</dbReference>
<dbReference type="InterPro" id="IPR049315">
    <property type="entry name" value="GDC-P_N"/>
</dbReference>
<dbReference type="InterPro" id="IPR020581">
    <property type="entry name" value="GDC_P"/>
</dbReference>
<dbReference type="InterPro" id="IPR015424">
    <property type="entry name" value="PyrdxlP-dep_Trfase"/>
</dbReference>
<dbReference type="InterPro" id="IPR015421">
    <property type="entry name" value="PyrdxlP-dep_Trfase_major"/>
</dbReference>
<dbReference type="InterPro" id="IPR015422">
    <property type="entry name" value="PyrdxlP-dep_Trfase_small"/>
</dbReference>
<dbReference type="NCBIfam" id="NF003346">
    <property type="entry name" value="PRK04366.1"/>
    <property type="match status" value="1"/>
</dbReference>
<dbReference type="PANTHER" id="PTHR11773:SF1">
    <property type="entry name" value="GLYCINE DEHYDROGENASE (DECARBOXYLATING), MITOCHONDRIAL"/>
    <property type="match status" value="1"/>
</dbReference>
<dbReference type="PANTHER" id="PTHR11773">
    <property type="entry name" value="GLYCINE DEHYDROGENASE, DECARBOXYLATING"/>
    <property type="match status" value="1"/>
</dbReference>
<dbReference type="Pfam" id="PF21478">
    <property type="entry name" value="GcvP2_C"/>
    <property type="match status" value="1"/>
</dbReference>
<dbReference type="Pfam" id="PF02347">
    <property type="entry name" value="GDC-P"/>
    <property type="match status" value="1"/>
</dbReference>
<dbReference type="SUPFAM" id="SSF53383">
    <property type="entry name" value="PLP-dependent transferases"/>
    <property type="match status" value="1"/>
</dbReference>
<gene>
    <name evidence="1" type="primary">gcvPB</name>
    <name type="ordered locus">RBAM_022870</name>
</gene>
<accession>A7Z6M2</accession>
<feature type="chain" id="PRO_1000045686" description="Probable glycine dehydrogenase (decarboxylating) subunit 2">
    <location>
        <begin position="1"/>
        <end position="491"/>
    </location>
</feature>
<feature type="modified residue" description="N6-(pyridoxal phosphate)lysine" evidence="1">
    <location>
        <position position="273"/>
    </location>
</feature>
<comment type="function">
    <text evidence="1">The glycine cleavage system catalyzes the degradation of glycine. The P protein binds the alpha-amino group of glycine through its pyridoxal phosphate cofactor; CO(2) is released and the remaining methylamine moiety is then transferred to the lipoamide cofactor of the H protein.</text>
</comment>
<comment type="catalytic activity">
    <reaction evidence="1">
        <text>N(6)-[(R)-lipoyl]-L-lysyl-[glycine-cleavage complex H protein] + glycine + H(+) = N(6)-[(R)-S(8)-aminomethyldihydrolipoyl]-L-lysyl-[glycine-cleavage complex H protein] + CO2</text>
        <dbReference type="Rhea" id="RHEA:24304"/>
        <dbReference type="Rhea" id="RHEA-COMP:10494"/>
        <dbReference type="Rhea" id="RHEA-COMP:10495"/>
        <dbReference type="ChEBI" id="CHEBI:15378"/>
        <dbReference type="ChEBI" id="CHEBI:16526"/>
        <dbReference type="ChEBI" id="CHEBI:57305"/>
        <dbReference type="ChEBI" id="CHEBI:83099"/>
        <dbReference type="ChEBI" id="CHEBI:83143"/>
        <dbReference type="EC" id="1.4.4.2"/>
    </reaction>
</comment>
<comment type="cofactor">
    <cofactor evidence="1">
        <name>pyridoxal 5'-phosphate</name>
        <dbReference type="ChEBI" id="CHEBI:597326"/>
    </cofactor>
</comment>
<comment type="subunit">
    <text evidence="1">The glycine cleavage system is composed of four proteins: P, T, L and H. In this organism, the P 'protein' is a heterodimer of two subunits.</text>
</comment>
<comment type="similarity">
    <text evidence="1">Belongs to the GcvP family. C-terminal subunit subfamily.</text>
</comment>
<keyword id="KW-0560">Oxidoreductase</keyword>
<keyword id="KW-0663">Pyridoxal phosphate</keyword>
<sequence>MNNQDQALIFEMSREGRIGYSLPELDVPETELESLLPGDYIRDEDAKLPEVSELDIMRHYTALSKRNHGVDSGFYPLGSCTMKYNPKLNEKIARIAGFSAIHPLQDEDTVQGALELLYDLSGHLEEITGMDEVTLQPAAGAHGEWTGLMMIRAYHEARGDFGRTKVIVPDSAHGTNPASATVAGFETITVKSNEHGLVDIEDLKRAVNEETAALMLTNPNTLGLFEENITEMAEIVHQAGGKLYYDGANLNAVLSKARPGDMGFDVVHLNLHKTFTGPHGGGGPGSGPVGVKKEFIPYLPKPVLTKKEGRLTFDYDRPQSIGRVKPYYGNFGINVRAYTYIRSMGPDGLKAVTENAVLNANYMMRRLAPYYDLPYDRHCKHEFVLSGRRQKKLGVRTLDIAKRLLDFGYHPPTVYFPLNVEESIMIEPTETESKETLDAFIDAMIQIAREAEESPEIVQEAPHTTVVKRMDETKAARKPVLKYERTLDGSR</sequence>
<protein>
    <recommendedName>
        <fullName evidence="1">Probable glycine dehydrogenase (decarboxylating) subunit 2</fullName>
        <ecNumber evidence="1">1.4.4.2</ecNumber>
    </recommendedName>
    <alternativeName>
        <fullName evidence="1">Glycine cleavage system P-protein subunit 2</fullName>
    </alternativeName>
    <alternativeName>
        <fullName evidence="1">Glycine decarboxylase subunit 2</fullName>
    </alternativeName>
    <alternativeName>
        <fullName evidence="1">Glycine dehydrogenase (aminomethyl-transferring) subunit 2</fullName>
    </alternativeName>
</protein>
<proteinExistence type="inferred from homology"/>
<organism>
    <name type="scientific">Bacillus velezensis (strain DSM 23117 / BGSC 10A6 / LMG 26770 / FZB42)</name>
    <name type="common">Bacillus amyloliquefaciens subsp. plantarum</name>
    <dbReference type="NCBI Taxonomy" id="326423"/>
    <lineage>
        <taxon>Bacteria</taxon>
        <taxon>Bacillati</taxon>
        <taxon>Bacillota</taxon>
        <taxon>Bacilli</taxon>
        <taxon>Bacillales</taxon>
        <taxon>Bacillaceae</taxon>
        <taxon>Bacillus</taxon>
        <taxon>Bacillus amyloliquefaciens group</taxon>
    </lineage>
</organism>
<name>GCSPB_BACVZ</name>
<reference key="1">
    <citation type="journal article" date="2007" name="Nat. Biotechnol.">
        <title>Comparative analysis of the complete genome sequence of the plant growth-promoting bacterium Bacillus amyloliquefaciens FZB42.</title>
        <authorList>
            <person name="Chen X.H."/>
            <person name="Koumoutsi A."/>
            <person name="Scholz R."/>
            <person name="Eisenreich A."/>
            <person name="Schneider K."/>
            <person name="Heinemeyer I."/>
            <person name="Morgenstern B."/>
            <person name="Voss B."/>
            <person name="Hess W.R."/>
            <person name="Reva O."/>
            <person name="Junge H."/>
            <person name="Voigt B."/>
            <person name="Jungblut P.R."/>
            <person name="Vater J."/>
            <person name="Suessmuth R."/>
            <person name="Liesegang H."/>
            <person name="Strittmatter A."/>
            <person name="Gottschalk G."/>
            <person name="Borriss R."/>
        </authorList>
    </citation>
    <scope>NUCLEOTIDE SEQUENCE [LARGE SCALE GENOMIC DNA]</scope>
    <source>
        <strain>DSM 23117 / BGSC 10A6 / LMG 26770 / FZB42</strain>
    </source>
</reference>